<gene>
    <name evidence="1" type="primary">nadA</name>
    <name type="ordered locus">EcHS_A0804</name>
</gene>
<protein>
    <recommendedName>
        <fullName evidence="1">Quinolinate synthase</fullName>
        <ecNumber evidence="1">2.5.1.72</ecNumber>
    </recommendedName>
</protein>
<proteinExistence type="inferred from homology"/>
<dbReference type="EC" id="2.5.1.72" evidence="1"/>
<dbReference type="EMBL" id="CP000802">
    <property type="protein sequence ID" value="ABV05160.1"/>
    <property type="molecule type" value="Genomic_DNA"/>
</dbReference>
<dbReference type="RefSeq" id="WP_000115293.1">
    <property type="nucleotide sequence ID" value="NC_009800.1"/>
</dbReference>
<dbReference type="SMR" id="A7ZY06"/>
<dbReference type="KEGG" id="ecx:EcHS_A0804"/>
<dbReference type="HOGENOM" id="CLU_047382_1_0_6"/>
<dbReference type="UniPathway" id="UPA00253">
    <property type="reaction ID" value="UER00327"/>
</dbReference>
<dbReference type="GO" id="GO:0005829">
    <property type="term" value="C:cytosol"/>
    <property type="evidence" value="ECO:0007669"/>
    <property type="project" value="TreeGrafter"/>
</dbReference>
<dbReference type="GO" id="GO:0051539">
    <property type="term" value="F:4 iron, 4 sulfur cluster binding"/>
    <property type="evidence" value="ECO:0007669"/>
    <property type="project" value="UniProtKB-KW"/>
</dbReference>
<dbReference type="GO" id="GO:0046872">
    <property type="term" value="F:metal ion binding"/>
    <property type="evidence" value="ECO:0007669"/>
    <property type="project" value="UniProtKB-KW"/>
</dbReference>
<dbReference type="GO" id="GO:0008987">
    <property type="term" value="F:quinolinate synthetase A activity"/>
    <property type="evidence" value="ECO:0007669"/>
    <property type="project" value="UniProtKB-UniRule"/>
</dbReference>
<dbReference type="GO" id="GO:0034628">
    <property type="term" value="P:'de novo' NAD biosynthetic process from L-aspartate"/>
    <property type="evidence" value="ECO:0007669"/>
    <property type="project" value="TreeGrafter"/>
</dbReference>
<dbReference type="FunFam" id="3.40.50.10800:FF:000001">
    <property type="entry name" value="Quinolinate synthase A"/>
    <property type="match status" value="1"/>
</dbReference>
<dbReference type="FunFam" id="3.40.50.10800:FF:000003">
    <property type="entry name" value="Quinolinate synthase A"/>
    <property type="match status" value="1"/>
</dbReference>
<dbReference type="Gene3D" id="3.40.50.10800">
    <property type="entry name" value="NadA-like"/>
    <property type="match status" value="3"/>
</dbReference>
<dbReference type="HAMAP" id="MF_00567">
    <property type="entry name" value="NadA_type1"/>
    <property type="match status" value="1"/>
</dbReference>
<dbReference type="InterPro" id="IPR003473">
    <property type="entry name" value="NadA"/>
</dbReference>
<dbReference type="InterPro" id="IPR036094">
    <property type="entry name" value="NadA_sf"/>
</dbReference>
<dbReference type="InterPro" id="IPR023513">
    <property type="entry name" value="Quinolinate_synth_A_type1"/>
</dbReference>
<dbReference type="NCBIfam" id="TIGR00550">
    <property type="entry name" value="nadA"/>
    <property type="match status" value="1"/>
</dbReference>
<dbReference type="NCBIfam" id="NF006877">
    <property type="entry name" value="PRK09375.1-1"/>
    <property type="match status" value="1"/>
</dbReference>
<dbReference type="NCBIfam" id="NF006878">
    <property type="entry name" value="PRK09375.1-2"/>
    <property type="match status" value="1"/>
</dbReference>
<dbReference type="PANTHER" id="PTHR30573:SF0">
    <property type="entry name" value="QUINOLINATE SYNTHASE, CHLOROPLASTIC"/>
    <property type="match status" value="1"/>
</dbReference>
<dbReference type="PANTHER" id="PTHR30573">
    <property type="entry name" value="QUINOLINATE SYNTHETASE A"/>
    <property type="match status" value="1"/>
</dbReference>
<dbReference type="Pfam" id="PF02445">
    <property type="entry name" value="NadA"/>
    <property type="match status" value="1"/>
</dbReference>
<dbReference type="SUPFAM" id="SSF142754">
    <property type="entry name" value="NadA-like"/>
    <property type="match status" value="1"/>
</dbReference>
<accession>A7ZY06</accession>
<feature type="chain" id="PRO_1000061142" description="Quinolinate synthase">
    <location>
        <begin position="1"/>
        <end position="347"/>
    </location>
</feature>
<feature type="binding site" evidence="1">
    <location>
        <position position="47"/>
    </location>
    <ligand>
        <name>iminosuccinate</name>
        <dbReference type="ChEBI" id="CHEBI:77875"/>
    </ligand>
</feature>
<feature type="binding site" evidence="1">
    <location>
        <position position="68"/>
    </location>
    <ligand>
        <name>iminosuccinate</name>
        <dbReference type="ChEBI" id="CHEBI:77875"/>
    </ligand>
</feature>
<feature type="binding site" evidence="1">
    <location>
        <position position="113"/>
    </location>
    <ligand>
        <name>[4Fe-4S] cluster</name>
        <dbReference type="ChEBI" id="CHEBI:49883"/>
    </ligand>
</feature>
<feature type="binding site" evidence="1">
    <location>
        <begin position="139"/>
        <end position="141"/>
    </location>
    <ligand>
        <name>iminosuccinate</name>
        <dbReference type="ChEBI" id="CHEBI:77875"/>
    </ligand>
</feature>
<feature type="binding site" evidence="1">
    <location>
        <position position="156"/>
    </location>
    <ligand>
        <name>iminosuccinate</name>
        <dbReference type="ChEBI" id="CHEBI:77875"/>
    </ligand>
</feature>
<feature type="binding site" evidence="1">
    <location>
        <position position="200"/>
    </location>
    <ligand>
        <name>[4Fe-4S] cluster</name>
        <dbReference type="ChEBI" id="CHEBI:49883"/>
    </ligand>
</feature>
<feature type="binding site" evidence="1">
    <location>
        <begin position="226"/>
        <end position="228"/>
    </location>
    <ligand>
        <name>iminosuccinate</name>
        <dbReference type="ChEBI" id="CHEBI:77875"/>
    </ligand>
</feature>
<feature type="binding site" evidence="1">
    <location>
        <position position="243"/>
    </location>
    <ligand>
        <name>iminosuccinate</name>
        <dbReference type="ChEBI" id="CHEBI:77875"/>
    </ligand>
</feature>
<feature type="binding site" evidence="1">
    <location>
        <position position="297"/>
    </location>
    <ligand>
        <name>[4Fe-4S] cluster</name>
        <dbReference type="ChEBI" id="CHEBI:49883"/>
    </ligand>
</feature>
<organism>
    <name type="scientific">Escherichia coli O9:H4 (strain HS)</name>
    <dbReference type="NCBI Taxonomy" id="331112"/>
    <lineage>
        <taxon>Bacteria</taxon>
        <taxon>Pseudomonadati</taxon>
        <taxon>Pseudomonadota</taxon>
        <taxon>Gammaproteobacteria</taxon>
        <taxon>Enterobacterales</taxon>
        <taxon>Enterobacteriaceae</taxon>
        <taxon>Escherichia</taxon>
    </lineage>
</organism>
<keyword id="KW-0004">4Fe-4S</keyword>
<keyword id="KW-0963">Cytoplasm</keyword>
<keyword id="KW-0408">Iron</keyword>
<keyword id="KW-0411">Iron-sulfur</keyword>
<keyword id="KW-0479">Metal-binding</keyword>
<keyword id="KW-0662">Pyridine nucleotide biosynthesis</keyword>
<keyword id="KW-0808">Transferase</keyword>
<sequence>MSVMFDPDTAIYPFPPKPTPLSIDEKAYYREKIKRLLKERNAVMVAHYYTDPEIQQLAEETGGCISDSLEMARFGAKHPASTLLVAGVRFMGETAKILSPEKTILMPTLQAECSLDLGCPVEEFNAFCDAHPDRTVVVYANTSAAVKARADWVVTSSIAVELIDHLDSLGEKIIWAPDKHLGRYVQKQTGGDILCWQGACIVHDEFKTQALTRLQEEYPDAAILVHPESPQAIVDMADAVGSTSQLIAAAKTLPHQRLIVATDRGIFYKMQQAVPDKELLEAPTAGEGATCRSCAHCPWMAMNGLQAIAKALEQEGSNHEVHVEERLRERALVPLNRMLDFAATLRG</sequence>
<evidence type="ECO:0000255" key="1">
    <source>
        <dbReference type="HAMAP-Rule" id="MF_00567"/>
    </source>
</evidence>
<reference key="1">
    <citation type="journal article" date="2008" name="J. Bacteriol.">
        <title>The pangenome structure of Escherichia coli: comparative genomic analysis of E. coli commensal and pathogenic isolates.</title>
        <authorList>
            <person name="Rasko D.A."/>
            <person name="Rosovitz M.J."/>
            <person name="Myers G.S.A."/>
            <person name="Mongodin E.F."/>
            <person name="Fricke W.F."/>
            <person name="Gajer P."/>
            <person name="Crabtree J."/>
            <person name="Sebaihia M."/>
            <person name="Thomson N.R."/>
            <person name="Chaudhuri R."/>
            <person name="Henderson I.R."/>
            <person name="Sperandio V."/>
            <person name="Ravel J."/>
        </authorList>
    </citation>
    <scope>NUCLEOTIDE SEQUENCE [LARGE SCALE GENOMIC DNA]</scope>
    <source>
        <strain>HS</strain>
    </source>
</reference>
<comment type="function">
    <text evidence="1">Catalyzes the condensation of iminoaspartate with dihydroxyacetone phosphate to form quinolinate.</text>
</comment>
<comment type="catalytic activity">
    <reaction evidence="1">
        <text>iminosuccinate + dihydroxyacetone phosphate = quinolinate + phosphate + 2 H2O + H(+)</text>
        <dbReference type="Rhea" id="RHEA:25888"/>
        <dbReference type="ChEBI" id="CHEBI:15377"/>
        <dbReference type="ChEBI" id="CHEBI:15378"/>
        <dbReference type="ChEBI" id="CHEBI:29959"/>
        <dbReference type="ChEBI" id="CHEBI:43474"/>
        <dbReference type="ChEBI" id="CHEBI:57642"/>
        <dbReference type="ChEBI" id="CHEBI:77875"/>
        <dbReference type="EC" id="2.5.1.72"/>
    </reaction>
    <physiologicalReaction direction="left-to-right" evidence="1">
        <dbReference type="Rhea" id="RHEA:25889"/>
    </physiologicalReaction>
</comment>
<comment type="cofactor">
    <cofactor evidence="1">
        <name>[4Fe-4S] cluster</name>
        <dbReference type="ChEBI" id="CHEBI:49883"/>
    </cofactor>
    <text evidence="1">Binds 1 [4Fe-4S] cluster per subunit.</text>
</comment>
<comment type="pathway">
    <text evidence="1">Cofactor biosynthesis; NAD(+) biosynthesis; quinolinate from iminoaspartate: step 1/1.</text>
</comment>
<comment type="subcellular location">
    <subcellularLocation>
        <location evidence="1">Cytoplasm</location>
    </subcellularLocation>
</comment>
<comment type="similarity">
    <text evidence="1">Belongs to the quinolinate synthase family. Type 1 subfamily.</text>
</comment>
<name>NADA_ECOHS</name>